<proteinExistence type="inferred from homology"/>
<feature type="chain" id="PRO_1000166788" description="Large ribosomal subunit protein uL6">
    <location>
        <begin position="1"/>
        <end position="182"/>
    </location>
</feature>
<accession>B9MKG6</accession>
<keyword id="KW-0687">Ribonucleoprotein</keyword>
<keyword id="KW-0689">Ribosomal protein</keyword>
<keyword id="KW-0694">RNA-binding</keyword>
<keyword id="KW-0699">rRNA-binding</keyword>
<protein>
    <recommendedName>
        <fullName evidence="1">Large ribosomal subunit protein uL6</fullName>
    </recommendedName>
    <alternativeName>
        <fullName evidence="2">50S ribosomal protein L6</fullName>
    </alternativeName>
</protein>
<evidence type="ECO:0000255" key="1">
    <source>
        <dbReference type="HAMAP-Rule" id="MF_01365"/>
    </source>
</evidence>
<evidence type="ECO:0000305" key="2"/>
<reference key="1">
    <citation type="submission" date="2009-01" db="EMBL/GenBank/DDBJ databases">
        <title>Complete sequence of chromosome of Caldicellulosiruptor becscii DSM 6725.</title>
        <authorList>
            <person name="Lucas S."/>
            <person name="Copeland A."/>
            <person name="Lapidus A."/>
            <person name="Glavina del Rio T."/>
            <person name="Tice H."/>
            <person name="Bruce D."/>
            <person name="Goodwin L."/>
            <person name="Pitluck S."/>
            <person name="Sims D."/>
            <person name="Meincke L."/>
            <person name="Brettin T."/>
            <person name="Detter J.C."/>
            <person name="Han C."/>
            <person name="Larimer F."/>
            <person name="Land M."/>
            <person name="Hauser L."/>
            <person name="Kyrpides N."/>
            <person name="Ovchinnikova G."/>
            <person name="Kataeva I."/>
            <person name="Adams M.W.W."/>
        </authorList>
    </citation>
    <scope>NUCLEOTIDE SEQUENCE [LARGE SCALE GENOMIC DNA]</scope>
    <source>
        <strain>ATCC BAA-1888 / DSM 6725 / KCTC 15123 / Z-1320</strain>
    </source>
</reference>
<comment type="function">
    <text evidence="1">This protein binds to the 23S rRNA, and is important in its secondary structure. It is located near the subunit interface in the base of the L7/L12 stalk, and near the tRNA binding site of the peptidyltransferase center.</text>
</comment>
<comment type="subunit">
    <text evidence="1">Part of the 50S ribosomal subunit.</text>
</comment>
<comment type="similarity">
    <text evidence="1">Belongs to the universal ribosomal protein uL6 family.</text>
</comment>
<organism>
    <name type="scientific">Caldicellulosiruptor bescii (strain ATCC BAA-1888 / DSM 6725 / KCTC 15123 / Z-1320)</name>
    <name type="common">Anaerocellum thermophilum</name>
    <dbReference type="NCBI Taxonomy" id="521460"/>
    <lineage>
        <taxon>Bacteria</taxon>
        <taxon>Bacillati</taxon>
        <taxon>Bacillota</taxon>
        <taxon>Bacillota incertae sedis</taxon>
        <taxon>Caldicellulosiruptorales</taxon>
        <taxon>Caldicellulosiruptoraceae</taxon>
        <taxon>Caldicellulosiruptor</taxon>
    </lineage>
</organism>
<dbReference type="EMBL" id="CP001393">
    <property type="protein sequence ID" value="ACM60824.1"/>
    <property type="molecule type" value="Genomic_DNA"/>
</dbReference>
<dbReference type="RefSeq" id="WP_015908141.1">
    <property type="nucleotide sequence ID" value="NC_012034.1"/>
</dbReference>
<dbReference type="SMR" id="B9MKG6"/>
<dbReference type="STRING" id="521460.Athe_1730"/>
<dbReference type="GeneID" id="31773087"/>
<dbReference type="KEGG" id="ate:Athe_1730"/>
<dbReference type="eggNOG" id="COG0097">
    <property type="taxonomic scope" value="Bacteria"/>
</dbReference>
<dbReference type="HOGENOM" id="CLU_065464_1_2_9"/>
<dbReference type="Proteomes" id="UP000007723">
    <property type="component" value="Chromosome"/>
</dbReference>
<dbReference type="GO" id="GO:0022625">
    <property type="term" value="C:cytosolic large ribosomal subunit"/>
    <property type="evidence" value="ECO:0007669"/>
    <property type="project" value="TreeGrafter"/>
</dbReference>
<dbReference type="GO" id="GO:0019843">
    <property type="term" value="F:rRNA binding"/>
    <property type="evidence" value="ECO:0007669"/>
    <property type="project" value="UniProtKB-UniRule"/>
</dbReference>
<dbReference type="GO" id="GO:0003735">
    <property type="term" value="F:structural constituent of ribosome"/>
    <property type="evidence" value="ECO:0007669"/>
    <property type="project" value="InterPro"/>
</dbReference>
<dbReference type="GO" id="GO:0002181">
    <property type="term" value="P:cytoplasmic translation"/>
    <property type="evidence" value="ECO:0007669"/>
    <property type="project" value="TreeGrafter"/>
</dbReference>
<dbReference type="FunFam" id="3.90.930.12:FF:000001">
    <property type="entry name" value="50S ribosomal protein L6"/>
    <property type="match status" value="1"/>
</dbReference>
<dbReference type="FunFam" id="3.90.930.12:FF:000002">
    <property type="entry name" value="50S ribosomal protein L6"/>
    <property type="match status" value="1"/>
</dbReference>
<dbReference type="Gene3D" id="3.90.930.12">
    <property type="entry name" value="Ribosomal protein L6, alpha-beta domain"/>
    <property type="match status" value="2"/>
</dbReference>
<dbReference type="HAMAP" id="MF_01365_B">
    <property type="entry name" value="Ribosomal_uL6_B"/>
    <property type="match status" value="1"/>
</dbReference>
<dbReference type="InterPro" id="IPR000702">
    <property type="entry name" value="Ribosomal_uL6-like"/>
</dbReference>
<dbReference type="InterPro" id="IPR036789">
    <property type="entry name" value="Ribosomal_uL6-like_a/b-dom_sf"/>
</dbReference>
<dbReference type="InterPro" id="IPR020040">
    <property type="entry name" value="Ribosomal_uL6_a/b-dom"/>
</dbReference>
<dbReference type="InterPro" id="IPR019906">
    <property type="entry name" value="Ribosomal_uL6_bac-type"/>
</dbReference>
<dbReference type="NCBIfam" id="TIGR03654">
    <property type="entry name" value="L6_bact"/>
    <property type="match status" value="1"/>
</dbReference>
<dbReference type="PANTHER" id="PTHR11655">
    <property type="entry name" value="60S/50S RIBOSOMAL PROTEIN L6/L9"/>
    <property type="match status" value="1"/>
</dbReference>
<dbReference type="PANTHER" id="PTHR11655:SF14">
    <property type="entry name" value="LARGE RIBOSOMAL SUBUNIT PROTEIN UL6M"/>
    <property type="match status" value="1"/>
</dbReference>
<dbReference type="Pfam" id="PF00347">
    <property type="entry name" value="Ribosomal_L6"/>
    <property type="match status" value="2"/>
</dbReference>
<dbReference type="PIRSF" id="PIRSF002162">
    <property type="entry name" value="Ribosomal_L6"/>
    <property type="match status" value="1"/>
</dbReference>
<dbReference type="PRINTS" id="PR00059">
    <property type="entry name" value="RIBOSOMALL6"/>
</dbReference>
<dbReference type="SUPFAM" id="SSF56053">
    <property type="entry name" value="Ribosomal protein L6"/>
    <property type="match status" value="2"/>
</dbReference>
<gene>
    <name evidence="1" type="primary">rplF</name>
    <name type="ordered locus">Athe_1730</name>
</gene>
<sequence>MSRIGRKPIDIPSGVDVKIDGNVITVKGPKGTLTREIHPEMIVKIENNQIIVQRPSDERFHKALHGLTRTLIANMVEGVTKGYEKVLEVVGIGYRAQKQGKKLVLNVGYSHPVEIEEPAGITIEVPDQNRIVVKGIDKQQVGNFAANIRKVREPDPYLGKGIKYADEVLRLKEGKAGKGGKK</sequence>
<name>RL6_CALBD</name>